<dbReference type="EMBL" id="L77117">
    <property type="protein sequence ID" value="AAB98432.1"/>
    <property type="molecule type" value="Genomic_DNA"/>
</dbReference>
<dbReference type="PIR" id="G64353">
    <property type="entry name" value="G64353"/>
</dbReference>
<dbReference type="SMR" id="Q57873"/>
<dbReference type="PaxDb" id="243232-MJ_0431"/>
<dbReference type="EnsemblBacteria" id="AAB98432">
    <property type="protein sequence ID" value="AAB98432"/>
    <property type="gene ID" value="MJ_0431"/>
</dbReference>
<dbReference type="KEGG" id="mja:MJ_0431"/>
<dbReference type="eggNOG" id="arCOG11030">
    <property type="taxonomic scope" value="Archaea"/>
</dbReference>
<dbReference type="HOGENOM" id="CLU_197251_0_0_2"/>
<dbReference type="InParanoid" id="Q57873"/>
<dbReference type="Proteomes" id="UP000000805">
    <property type="component" value="Chromosome"/>
</dbReference>
<dbReference type="GO" id="GO:0009986">
    <property type="term" value="C:cell surface"/>
    <property type="evidence" value="ECO:0007669"/>
    <property type="project" value="UniProtKB-SubCell"/>
</dbReference>
<dbReference type="GO" id="GO:0005576">
    <property type="term" value="C:extracellular region"/>
    <property type="evidence" value="ECO:0007669"/>
    <property type="project" value="UniProtKB-SubCell"/>
</dbReference>
<dbReference type="GO" id="GO:0016020">
    <property type="term" value="C:membrane"/>
    <property type="evidence" value="ECO:0007669"/>
    <property type="project" value="UniProtKB-KW"/>
</dbReference>
<dbReference type="InterPro" id="IPR007166">
    <property type="entry name" value="Class3_signal_pept_motif"/>
</dbReference>
<dbReference type="Pfam" id="PF04021">
    <property type="entry name" value="Class_IIIsignal"/>
    <property type="match status" value="1"/>
</dbReference>
<comment type="subcellular location">
    <subcellularLocation>
        <location evidence="1">Secreted</location>
    </subcellularLocation>
    <subcellularLocation>
        <location evidence="1">Cell surface</location>
    </subcellularLocation>
    <subcellularLocation>
        <location evidence="1">Fimbrium</location>
    </subcellularLocation>
</comment>
<comment type="domain">
    <text evidence="2">Contains an amino terminal motif QXSXEXXXL, which is part of a class III signal sequence.</text>
</comment>
<comment type="PTM">
    <text evidence="1">The N-terminus is cleaved by the prepilin peptidase EppA, which recognizes the class III signal sequence.</text>
</comment>
<reference key="1">
    <citation type="journal article" date="1996" name="Science">
        <title>Complete genome sequence of the methanogenic archaeon, Methanococcus jannaschii.</title>
        <authorList>
            <person name="Bult C.J."/>
            <person name="White O."/>
            <person name="Olsen G.J."/>
            <person name="Zhou L."/>
            <person name="Fleischmann R.D."/>
            <person name="Sutton G.G."/>
            <person name="Blake J.A."/>
            <person name="FitzGerald L.M."/>
            <person name="Clayton R.A."/>
            <person name="Gocayne J.D."/>
            <person name="Kerlavage A.R."/>
            <person name="Dougherty B.A."/>
            <person name="Tomb J.-F."/>
            <person name="Adams M.D."/>
            <person name="Reich C.I."/>
            <person name="Overbeek R."/>
            <person name="Kirkness E.F."/>
            <person name="Weinstock K.G."/>
            <person name="Merrick J.M."/>
            <person name="Glodek A."/>
            <person name="Scott J.L."/>
            <person name="Geoghagen N.S.M."/>
            <person name="Weidman J.F."/>
            <person name="Fuhrmann J.L."/>
            <person name="Nguyen D."/>
            <person name="Utterback T.R."/>
            <person name="Kelley J.M."/>
            <person name="Peterson J.D."/>
            <person name="Sadow P.W."/>
            <person name="Hanna M.C."/>
            <person name="Cotton M.D."/>
            <person name="Roberts K.M."/>
            <person name="Hurst M.A."/>
            <person name="Kaine B.P."/>
            <person name="Borodovsky M."/>
            <person name="Klenk H.-P."/>
            <person name="Fraser C.M."/>
            <person name="Smith H.O."/>
            <person name="Woese C.R."/>
            <person name="Venter J.C."/>
        </authorList>
    </citation>
    <scope>NUCLEOTIDE SEQUENCE [LARGE SCALE GENOMIC DNA]</scope>
    <source>
        <strain>ATCC 43067 / DSM 2661 / JAL-1 / JCM 10045 / NBRC 100440</strain>
    </source>
</reference>
<feature type="propeptide" id="PRO_0000462037" evidence="3">
    <location>
        <begin position="1"/>
        <end position="15"/>
    </location>
</feature>
<feature type="chain" id="PRO_0000218265" description="Probable pilin MJ0431">
    <location>
        <begin position="16"/>
        <end position="75"/>
    </location>
</feature>
<feature type="short sequence motif" description="QXSXEXXXL" evidence="3">
    <location>
        <begin position="16"/>
        <end position="24"/>
    </location>
</feature>
<sequence length="75" mass="7890">MGKMKILKKLLSKKGQLSMEVGVLVAAAVLVAIIAAYFYVKNAKSAVASAGNKSAAFINVTANKSQEYISNLSNI</sequence>
<proteinExistence type="inferred from homology"/>
<name>Y431_METJA</name>
<evidence type="ECO:0000250" key="1">
    <source>
        <dbReference type="UniProtKB" id="Q6LWM4"/>
    </source>
</evidence>
<evidence type="ECO:0000250" key="2">
    <source>
        <dbReference type="UniProtKB" id="Q6M0N7"/>
    </source>
</evidence>
<evidence type="ECO:0000305" key="3"/>
<gene>
    <name type="ordered locus">MJ0431</name>
</gene>
<organism>
    <name type="scientific">Methanocaldococcus jannaschii (strain ATCC 43067 / DSM 2661 / JAL-1 / JCM 10045 / NBRC 100440)</name>
    <name type="common">Methanococcus jannaschii</name>
    <dbReference type="NCBI Taxonomy" id="243232"/>
    <lineage>
        <taxon>Archaea</taxon>
        <taxon>Methanobacteriati</taxon>
        <taxon>Methanobacteriota</taxon>
        <taxon>Methanomada group</taxon>
        <taxon>Methanococci</taxon>
        <taxon>Methanococcales</taxon>
        <taxon>Methanocaldococcaceae</taxon>
        <taxon>Methanocaldococcus</taxon>
    </lineage>
</organism>
<protein>
    <recommendedName>
        <fullName evidence="3">Probable pilin MJ0431</fullName>
    </recommendedName>
</protein>
<keyword id="KW-0281">Fimbrium</keyword>
<keyword id="KW-1185">Reference proteome</keyword>
<keyword id="KW-0964">Secreted</keyword>
<accession>Q57873</accession>